<proteinExistence type="evidence at protein level"/>
<sequence>HLGVVGLGGLGHVAVXQEAIENLXADEFLI</sequence>
<comment type="miscellaneous">
    <text>On the 2D-gel the determined pI of this unknown protein is: 6.3, its MW is: 39.2 kDa.</text>
</comment>
<comment type="similarity">
    <text evidence="1">Belongs to the zinc-containing alcohol dehydrogenase family.</text>
</comment>
<comment type="caution">
    <text evidence="1">The order of the peptides shown is unknown.</text>
</comment>
<protein>
    <recommendedName>
        <fullName>Unknown protein from spot 365 of 2D-PAGE of etiolated coleoptile</fullName>
    </recommendedName>
</protein>
<evidence type="ECO:0000305" key="1"/>
<dbReference type="MaizeGDB" id="123966"/>
<dbReference type="InParanoid" id="P80641"/>
<dbReference type="Proteomes" id="UP000007305">
    <property type="component" value="Unplaced"/>
</dbReference>
<feature type="chain" id="PRO_0000055530" description="Unknown protein from spot 365 of 2D-PAGE of etiolated coleoptile">
    <location>
        <begin position="1" status="less than"/>
        <end position="30" status="greater than"/>
    </location>
</feature>
<feature type="non-consecutive residues" evidence="1">
    <location>
        <begin position="15"/>
        <end position="16"/>
    </location>
</feature>
<feature type="non-terminal residue">
    <location>
        <position position="1"/>
    </location>
</feature>
<feature type="non-terminal residue">
    <location>
        <position position="30"/>
    </location>
</feature>
<keyword id="KW-0903">Direct protein sequencing</keyword>
<keyword id="KW-1185">Reference proteome</keyword>
<reference key="1">
    <citation type="journal article" date="1996" name="Theor. Appl. Genet.">
        <title>The maize two dimensional gel protein database: towards an integrated genome analysis program.</title>
        <authorList>
            <person name="Touzet P."/>
            <person name="Riccardi F."/>
            <person name="Morin C."/>
            <person name="Damerval C."/>
            <person name="Huet J.-C."/>
            <person name="Pernollet J.-C."/>
            <person name="Zivy M."/>
            <person name="de Vienne D."/>
        </authorList>
        <dbReference type="AGRICOLA" id="IND20551642"/>
    </citation>
    <scope>PROTEIN SEQUENCE</scope>
    <source>
        <tissue>Coleoptile</tissue>
    </source>
</reference>
<accession>P80641</accession>
<organism>
    <name type="scientific">Zea mays</name>
    <name type="common">Maize</name>
    <dbReference type="NCBI Taxonomy" id="4577"/>
    <lineage>
        <taxon>Eukaryota</taxon>
        <taxon>Viridiplantae</taxon>
        <taxon>Streptophyta</taxon>
        <taxon>Embryophyta</taxon>
        <taxon>Tracheophyta</taxon>
        <taxon>Spermatophyta</taxon>
        <taxon>Magnoliopsida</taxon>
        <taxon>Liliopsida</taxon>
        <taxon>Poales</taxon>
        <taxon>Poaceae</taxon>
        <taxon>PACMAD clade</taxon>
        <taxon>Panicoideae</taxon>
        <taxon>Andropogonodae</taxon>
        <taxon>Andropogoneae</taxon>
        <taxon>Tripsacinae</taxon>
        <taxon>Zea</taxon>
    </lineage>
</organism>
<name>UC35_MAIZE</name>